<name>FK152_ARATH</name>
<accession>Q38936</accession>
<accession>Q9FJL2</accession>
<feature type="signal peptide" evidence="2">
    <location>
        <begin position="1"/>
        <end position="25"/>
    </location>
</feature>
<feature type="chain" id="PRO_0000025509" description="Peptidyl-prolyl cis-trans isomerase FKBP15-2">
    <location>
        <begin position="26"/>
        <end position="163"/>
    </location>
</feature>
<feature type="domain" description="PPIase FKBP-type" evidence="3">
    <location>
        <begin position="52"/>
        <end position="140"/>
    </location>
</feature>
<feature type="region of interest" description="Disordered" evidence="4">
    <location>
        <begin position="142"/>
        <end position="163"/>
    </location>
</feature>
<feature type="short sequence motif" description="Prevents secretion from ER" evidence="2">
    <location>
        <begin position="160"/>
        <end position="163"/>
    </location>
</feature>
<feature type="compositionally biased region" description="Acidic residues" evidence="4">
    <location>
        <begin position="149"/>
        <end position="163"/>
    </location>
</feature>
<feature type="sequence conflict" description="In Ref. 1; AAC49391." evidence="5" ref="1">
    <original>SK</original>
    <variation>DE</variation>
    <location>
        <begin position="3"/>
        <end position="4"/>
    </location>
</feature>
<proteinExistence type="evidence at transcript level"/>
<reference key="1">
    <citation type="journal article" date="1996" name="Proc. Natl. Acad. Sci. U.S.A.">
        <title>Molecular characterization of a FKBP-type immunophilin from higher plants.</title>
        <authorList>
            <person name="Luan S."/>
            <person name="Kudla J."/>
            <person name="Gruissem W."/>
            <person name="Schreiber S.L."/>
        </authorList>
    </citation>
    <scope>NUCLEOTIDE SEQUENCE [MRNA]</scope>
    <source>
        <strain>cv. Columbia</strain>
    </source>
</reference>
<reference key="2">
    <citation type="journal article" date="1998" name="DNA Res.">
        <title>Structural analysis of Arabidopsis thaliana chromosome 5. VII. Sequence features of the regions of 1,013,767 bp covered by sixteen physically assigned P1 and TAC clones.</title>
        <authorList>
            <person name="Nakamura Y."/>
            <person name="Sato S."/>
            <person name="Asamizu E."/>
            <person name="Kaneko T."/>
            <person name="Kotani H."/>
            <person name="Miyajima N."/>
            <person name="Tabata S."/>
        </authorList>
    </citation>
    <scope>NUCLEOTIDE SEQUENCE [LARGE SCALE GENOMIC DNA]</scope>
    <source>
        <strain>cv. Columbia</strain>
    </source>
</reference>
<reference key="3">
    <citation type="journal article" date="2017" name="Plant J.">
        <title>Araport11: a complete reannotation of the Arabidopsis thaliana reference genome.</title>
        <authorList>
            <person name="Cheng C.Y."/>
            <person name="Krishnakumar V."/>
            <person name="Chan A.P."/>
            <person name="Thibaud-Nissen F."/>
            <person name="Schobel S."/>
            <person name="Town C.D."/>
        </authorList>
    </citation>
    <scope>GENOME REANNOTATION</scope>
    <source>
        <strain>cv. Columbia</strain>
    </source>
</reference>
<reference key="4">
    <citation type="journal article" date="2003" name="Science">
        <title>Empirical analysis of transcriptional activity in the Arabidopsis genome.</title>
        <authorList>
            <person name="Yamada K."/>
            <person name="Lim J."/>
            <person name="Dale J.M."/>
            <person name="Chen H."/>
            <person name="Shinn P."/>
            <person name="Palm C.J."/>
            <person name="Southwick A.M."/>
            <person name="Wu H.C."/>
            <person name="Kim C.J."/>
            <person name="Nguyen M."/>
            <person name="Pham P.K."/>
            <person name="Cheuk R.F."/>
            <person name="Karlin-Newmann G."/>
            <person name="Liu S.X."/>
            <person name="Lam B."/>
            <person name="Sakano H."/>
            <person name="Wu T."/>
            <person name="Yu G."/>
            <person name="Miranda M."/>
            <person name="Quach H.L."/>
            <person name="Tripp M."/>
            <person name="Chang C.H."/>
            <person name="Lee J.M."/>
            <person name="Toriumi M.J."/>
            <person name="Chan M.M."/>
            <person name="Tang C.C."/>
            <person name="Onodera C.S."/>
            <person name="Deng J.M."/>
            <person name="Akiyama K."/>
            <person name="Ansari Y."/>
            <person name="Arakawa T."/>
            <person name="Banh J."/>
            <person name="Banno F."/>
            <person name="Bowser L."/>
            <person name="Brooks S.Y."/>
            <person name="Carninci P."/>
            <person name="Chao Q."/>
            <person name="Choy N."/>
            <person name="Enju A."/>
            <person name="Goldsmith A.D."/>
            <person name="Gurjal M."/>
            <person name="Hansen N.F."/>
            <person name="Hayashizaki Y."/>
            <person name="Johnson-Hopson C."/>
            <person name="Hsuan V.W."/>
            <person name="Iida K."/>
            <person name="Karnes M."/>
            <person name="Khan S."/>
            <person name="Koesema E."/>
            <person name="Ishida J."/>
            <person name="Jiang P.X."/>
            <person name="Jones T."/>
            <person name="Kawai J."/>
            <person name="Kamiya A."/>
            <person name="Meyers C."/>
            <person name="Nakajima M."/>
            <person name="Narusaka M."/>
            <person name="Seki M."/>
            <person name="Sakurai T."/>
            <person name="Satou M."/>
            <person name="Tamse R."/>
            <person name="Vaysberg M."/>
            <person name="Wallender E.K."/>
            <person name="Wong C."/>
            <person name="Yamamura Y."/>
            <person name="Yuan S."/>
            <person name="Shinozaki K."/>
            <person name="Davis R.W."/>
            <person name="Theologis A."/>
            <person name="Ecker J.R."/>
        </authorList>
    </citation>
    <scope>NUCLEOTIDE SEQUENCE [LARGE SCALE MRNA]</scope>
    <source>
        <strain>cv. Columbia</strain>
    </source>
</reference>
<reference key="5">
    <citation type="submission" date="2002-03" db="EMBL/GenBank/DDBJ databases">
        <title>Full-length cDNA from Arabidopsis thaliana.</title>
        <authorList>
            <person name="Brover V.V."/>
            <person name="Troukhan M.E."/>
            <person name="Alexandrov N.A."/>
            <person name="Lu Y.-P."/>
            <person name="Flavell R.B."/>
            <person name="Feldmann K.A."/>
        </authorList>
    </citation>
    <scope>NUCLEOTIDE SEQUENCE [LARGE SCALE MRNA]</scope>
</reference>
<reference key="6">
    <citation type="journal article" date="2004" name="Plant Physiol.">
        <title>Immunophilins and parvulins. Superfamily of peptidyl prolyl isomerases in Arabidopsis.</title>
        <authorList>
            <person name="He Z."/>
            <person name="Li L."/>
            <person name="Luan S."/>
        </authorList>
    </citation>
    <scope>GENE FAMILY</scope>
    <scope>NOMENCLATURE</scope>
</reference>
<sequence>MASKMSLRYSLFLIFFSLISLQGFAKKTGDVSELQIGVKFKPKTCEVQAHKGDTIKVHYRGKLTDGTVFDSSFERGDPFEFKLGSGQVIKGWDQGLLGACVGEKRKLKIPAKLGYGEQGSPPTIPGGATLIFDTELIAVNEKPAGGEEYGGDEDDEGYGNDEL</sequence>
<dbReference type="EC" id="5.2.1.8"/>
<dbReference type="EMBL" id="U52047">
    <property type="protein sequence ID" value="AAC49391.1"/>
    <property type="molecule type" value="mRNA"/>
</dbReference>
<dbReference type="EMBL" id="AB015468">
    <property type="protein sequence ID" value="BAB10691.1"/>
    <property type="molecule type" value="Genomic_DNA"/>
</dbReference>
<dbReference type="EMBL" id="CP002688">
    <property type="protein sequence ID" value="AED95691.1"/>
    <property type="molecule type" value="Genomic_DNA"/>
</dbReference>
<dbReference type="EMBL" id="AF370159">
    <property type="protein sequence ID" value="AAK43974.1"/>
    <property type="molecule type" value="mRNA"/>
</dbReference>
<dbReference type="EMBL" id="AY059146">
    <property type="protein sequence ID" value="AAL15252.1"/>
    <property type="molecule type" value="mRNA"/>
</dbReference>
<dbReference type="EMBL" id="AY085294">
    <property type="protein sequence ID" value="AAM62526.1"/>
    <property type="molecule type" value="mRNA"/>
</dbReference>
<dbReference type="PIR" id="S71238">
    <property type="entry name" value="S71238"/>
</dbReference>
<dbReference type="RefSeq" id="NP_199669.1">
    <property type="nucleotide sequence ID" value="NM_124234.4"/>
</dbReference>
<dbReference type="SMR" id="Q38936"/>
<dbReference type="FunCoup" id="Q38936">
    <property type="interactions" value="3066"/>
</dbReference>
<dbReference type="STRING" id="3702.Q38936"/>
<dbReference type="PaxDb" id="3702-AT5G48580.1"/>
<dbReference type="ProteomicsDB" id="230599"/>
<dbReference type="EnsemblPlants" id="AT5G48580.1">
    <property type="protein sequence ID" value="AT5G48580.1"/>
    <property type="gene ID" value="AT5G48580"/>
</dbReference>
<dbReference type="GeneID" id="834915"/>
<dbReference type="Gramene" id="AT5G48580.1">
    <property type="protein sequence ID" value="AT5G48580.1"/>
    <property type="gene ID" value="AT5G48580"/>
</dbReference>
<dbReference type="KEGG" id="ath:AT5G48580"/>
<dbReference type="Araport" id="AT5G48580"/>
<dbReference type="TAIR" id="AT5G48580">
    <property type="gene designation" value="FKBP15-2"/>
</dbReference>
<dbReference type="eggNOG" id="KOG0549">
    <property type="taxonomic scope" value="Eukaryota"/>
</dbReference>
<dbReference type="HOGENOM" id="CLU_013615_8_2_1"/>
<dbReference type="InParanoid" id="Q38936"/>
<dbReference type="OMA" id="CEFKAHK"/>
<dbReference type="OrthoDB" id="1902587at2759"/>
<dbReference type="PhylomeDB" id="Q38936"/>
<dbReference type="CD-CODE" id="4299E36E">
    <property type="entry name" value="Nucleolus"/>
</dbReference>
<dbReference type="PRO" id="PR:Q38936"/>
<dbReference type="Proteomes" id="UP000006548">
    <property type="component" value="Chromosome 5"/>
</dbReference>
<dbReference type="ExpressionAtlas" id="Q38936">
    <property type="expression patterns" value="baseline and differential"/>
</dbReference>
<dbReference type="GO" id="GO:0005783">
    <property type="term" value="C:endoplasmic reticulum"/>
    <property type="evidence" value="ECO:0007005"/>
    <property type="project" value="TAIR"/>
</dbReference>
<dbReference type="GO" id="GO:0005788">
    <property type="term" value="C:endoplasmic reticulum lumen"/>
    <property type="evidence" value="ECO:0007669"/>
    <property type="project" value="UniProtKB-SubCell"/>
</dbReference>
<dbReference type="GO" id="GO:0005794">
    <property type="term" value="C:Golgi apparatus"/>
    <property type="evidence" value="ECO:0007005"/>
    <property type="project" value="TAIR"/>
</dbReference>
<dbReference type="GO" id="GO:0000325">
    <property type="term" value="C:plant-type vacuole"/>
    <property type="evidence" value="ECO:0007005"/>
    <property type="project" value="TAIR"/>
</dbReference>
<dbReference type="GO" id="GO:0009536">
    <property type="term" value="C:plastid"/>
    <property type="evidence" value="ECO:0007005"/>
    <property type="project" value="TAIR"/>
</dbReference>
<dbReference type="GO" id="GO:0003755">
    <property type="term" value="F:peptidyl-prolyl cis-trans isomerase activity"/>
    <property type="evidence" value="ECO:0000315"/>
    <property type="project" value="TAIR"/>
</dbReference>
<dbReference type="GO" id="GO:0061077">
    <property type="term" value="P:chaperone-mediated protein folding"/>
    <property type="evidence" value="ECO:0007669"/>
    <property type="project" value="InterPro"/>
</dbReference>
<dbReference type="GO" id="GO:0034976">
    <property type="term" value="P:response to endoplasmic reticulum stress"/>
    <property type="evidence" value="ECO:0000315"/>
    <property type="project" value="TAIR"/>
</dbReference>
<dbReference type="GO" id="GO:0009620">
    <property type="term" value="P:response to fungus"/>
    <property type="evidence" value="ECO:0000353"/>
    <property type="project" value="TAIR"/>
</dbReference>
<dbReference type="FunFam" id="3.10.50.40:FF:000016">
    <property type="entry name" value="Peptidylprolyl isomerase"/>
    <property type="match status" value="1"/>
</dbReference>
<dbReference type="Gene3D" id="3.10.50.40">
    <property type="match status" value="1"/>
</dbReference>
<dbReference type="InterPro" id="IPR044609">
    <property type="entry name" value="FKBP2/11"/>
</dbReference>
<dbReference type="InterPro" id="IPR046357">
    <property type="entry name" value="PPIase_dom_sf"/>
</dbReference>
<dbReference type="InterPro" id="IPR001179">
    <property type="entry name" value="PPIase_FKBP_dom"/>
</dbReference>
<dbReference type="PANTHER" id="PTHR45779:SF10">
    <property type="entry name" value="PEPTIDYL-PROLYL CIS-TRANS ISOMERASE FKBP15-2"/>
    <property type="match status" value="1"/>
</dbReference>
<dbReference type="PANTHER" id="PTHR45779">
    <property type="entry name" value="PEPTIDYLPROLYL ISOMERASE"/>
    <property type="match status" value="1"/>
</dbReference>
<dbReference type="Pfam" id="PF00254">
    <property type="entry name" value="FKBP_C"/>
    <property type="match status" value="1"/>
</dbReference>
<dbReference type="SUPFAM" id="SSF54534">
    <property type="entry name" value="FKBP-like"/>
    <property type="match status" value="1"/>
</dbReference>
<dbReference type="PROSITE" id="PS50059">
    <property type="entry name" value="FKBP_PPIASE"/>
    <property type="match status" value="1"/>
</dbReference>
<protein>
    <recommendedName>
        <fullName>Peptidyl-prolyl cis-trans isomerase FKBP15-2</fullName>
        <shortName>PPIase FKBP15-2</shortName>
        <ecNumber>5.2.1.8</ecNumber>
    </recommendedName>
    <alternativeName>
        <fullName>15 kDa FK506-binding protein</fullName>
        <shortName>15 kDa FKBP</shortName>
    </alternativeName>
    <alternativeName>
        <fullName>FK506-binding protein 15-2</fullName>
        <shortName>AtFKBP15-2</shortName>
    </alternativeName>
    <alternativeName>
        <fullName>FK506-binding protein 2-2</fullName>
    </alternativeName>
    <alternativeName>
        <fullName>Immunophilin FKBP15-2</fullName>
    </alternativeName>
    <alternativeName>
        <fullName>Rotamase</fullName>
    </alternativeName>
</protein>
<organism>
    <name type="scientific">Arabidopsis thaliana</name>
    <name type="common">Mouse-ear cress</name>
    <dbReference type="NCBI Taxonomy" id="3702"/>
    <lineage>
        <taxon>Eukaryota</taxon>
        <taxon>Viridiplantae</taxon>
        <taxon>Streptophyta</taxon>
        <taxon>Embryophyta</taxon>
        <taxon>Tracheophyta</taxon>
        <taxon>Spermatophyta</taxon>
        <taxon>Magnoliopsida</taxon>
        <taxon>eudicotyledons</taxon>
        <taxon>Gunneridae</taxon>
        <taxon>Pentapetalae</taxon>
        <taxon>rosids</taxon>
        <taxon>malvids</taxon>
        <taxon>Brassicales</taxon>
        <taxon>Brassicaceae</taxon>
        <taxon>Camelineae</taxon>
        <taxon>Arabidopsis</taxon>
    </lineage>
</organism>
<gene>
    <name type="primary">FKBP15-2</name>
    <name type="ordered locus">At5g48580</name>
    <name type="ORF">K15N18.5</name>
</gene>
<comment type="function">
    <text evidence="1">PPIases accelerate the folding of proteins. It catalyzes the cis-trans isomerization of proline imidic peptide bonds in oligopeptides (By similarity).</text>
</comment>
<comment type="catalytic activity">
    <reaction>
        <text>[protein]-peptidylproline (omega=180) = [protein]-peptidylproline (omega=0)</text>
        <dbReference type="Rhea" id="RHEA:16237"/>
        <dbReference type="Rhea" id="RHEA-COMP:10747"/>
        <dbReference type="Rhea" id="RHEA-COMP:10748"/>
        <dbReference type="ChEBI" id="CHEBI:83833"/>
        <dbReference type="ChEBI" id="CHEBI:83834"/>
        <dbReference type="EC" id="5.2.1.8"/>
    </reaction>
</comment>
<comment type="subcellular location">
    <subcellularLocation>
        <location evidence="5">Endoplasmic reticulum lumen</location>
    </subcellularLocation>
</comment>
<comment type="similarity">
    <text evidence="5">Belongs to the FKBP-type PPIase family.</text>
</comment>
<keyword id="KW-0256">Endoplasmic reticulum</keyword>
<keyword id="KW-0413">Isomerase</keyword>
<keyword id="KW-1185">Reference proteome</keyword>
<keyword id="KW-0697">Rotamase</keyword>
<keyword id="KW-0732">Signal</keyword>
<evidence type="ECO:0000250" key="1"/>
<evidence type="ECO:0000255" key="2"/>
<evidence type="ECO:0000255" key="3">
    <source>
        <dbReference type="PROSITE-ProRule" id="PRU00277"/>
    </source>
</evidence>
<evidence type="ECO:0000256" key="4">
    <source>
        <dbReference type="SAM" id="MobiDB-lite"/>
    </source>
</evidence>
<evidence type="ECO:0000305" key="5"/>